<proteinExistence type="inferred from homology"/>
<comment type="function">
    <text evidence="2">Catalyzes the formation of N(7)-methylguanine at position 46 (m7G46) in tRNA.</text>
</comment>
<comment type="catalytic activity">
    <reaction evidence="2">
        <text>guanosine(46) in tRNA + S-adenosyl-L-methionine = N(7)-methylguanosine(46) in tRNA + S-adenosyl-L-homocysteine</text>
        <dbReference type="Rhea" id="RHEA:42708"/>
        <dbReference type="Rhea" id="RHEA-COMP:10188"/>
        <dbReference type="Rhea" id="RHEA-COMP:10189"/>
        <dbReference type="ChEBI" id="CHEBI:57856"/>
        <dbReference type="ChEBI" id="CHEBI:59789"/>
        <dbReference type="ChEBI" id="CHEBI:74269"/>
        <dbReference type="ChEBI" id="CHEBI:74480"/>
        <dbReference type="EC" id="2.1.1.33"/>
    </reaction>
</comment>
<comment type="pathway">
    <text evidence="2">tRNA modification; N(7)-methylguanine-tRNA biosynthesis.</text>
</comment>
<comment type="similarity">
    <text evidence="2">Belongs to the class I-like SAM-binding methyltransferase superfamily. TrmB family.</text>
</comment>
<reference key="1">
    <citation type="journal article" date="2006" name="Appl. Environ. Microbiol.">
        <title>Genome sequence of the chemolithoautotrophic nitrite-oxidizing bacterium Nitrobacter winogradskyi Nb-255.</title>
        <authorList>
            <person name="Starkenburg S.R."/>
            <person name="Chain P.S.G."/>
            <person name="Sayavedra-Soto L.A."/>
            <person name="Hauser L."/>
            <person name="Land M.L."/>
            <person name="Larimer F.W."/>
            <person name="Malfatti S.A."/>
            <person name="Klotz M.G."/>
            <person name="Bottomley P.J."/>
            <person name="Arp D.J."/>
            <person name="Hickey W.J."/>
        </authorList>
    </citation>
    <scope>NUCLEOTIDE SEQUENCE [LARGE SCALE GENOMIC DNA]</scope>
    <source>
        <strain>ATCC 25391 / DSM 10237 / CIP 104748 / NCIMB 11846 / Nb-255</strain>
    </source>
</reference>
<protein>
    <recommendedName>
        <fullName evidence="2">tRNA (guanine-N(7)-)-methyltransferase</fullName>
        <ecNumber evidence="2">2.1.1.33</ecNumber>
    </recommendedName>
    <alternativeName>
        <fullName evidence="2">tRNA (guanine(46)-N(7))-methyltransferase</fullName>
    </alternativeName>
    <alternativeName>
        <fullName evidence="2">tRNA(m7G46)-methyltransferase</fullName>
    </alternativeName>
</protein>
<name>TRMB_NITWN</name>
<keyword id="KW-0489">Methyltransferase</keyword>
<keyword id="KW-1185">Reference proteome</keyword>
<keyword id="KW-0949">S-adenosyl-L-methionine</keyword>
<keyword id="KW-0808">Transferase</keyword>
<keyword id="KW-0819">tRNA processing</keyword>
<evidence type="ECO:0000250" key="1"/>
<evidence type="ECO:0000255" key="2">
    <source>
        <dbReference type="HAMAP-Rule" id="MF_01057"/>
    </source>
</evidence>
<evidence type="ECO:0000256" key="3">
    <source>
        <dbReference type="SAM" id="MobiDB-lite"/>
    </source>
</evidence>
<dbReference type="EC" id="2.1.1.33" evidence="2"/>
<dbReference type="EMBL" id="CP000115">
    <property type="protein sequence ID" value="ABA03288.1"/>
    <property type="molecule type" value="Genomic_DNA"/>
</dbReference>
<dbReference type="RefSeq" id="WP_011313359.1">
    <property type="nucleotide sequence ID" value="NC_007406.1"/>
</dbReference>
<dbReference type="SMR" id="Q3SWQ3"/>
<dbReference type="STRING" id="323098.Nwi_0020"/>
<dbReference type="KEGG" id="nwi:Nwi_0020"/>
<dbReference type="eggNOG" id="COG0220">
    <property type="taxonomic scope" value="Bacteria"/>
</dbReference>
<dbReference type="HOGENOM" id="CLU_050910_0_3_5"/>
<dbReference type="OrthoDB" id="9802090at2"/>
<dbReference type="UniPathway" id="UPA00989"/>
<dbReference type="Proteomes" id="UP000002531">
    <property type="component" value="Chromosome"/>
</dbReference>
<dbReference type="GO" id="GO:0043527">
    <property type="term" value="C:tRNA methyltransferase complex"/>
    <property type="evidence" value="ECO:0007669"/>
    <property type="project" value="TreeGrafter"/>
</dbReference>
<dbReference type="GO" id="GO:0008176">
    <property type="term" value="F:tRNA (guanine(46)-N7)-methyltransferase activity"/>
    <property type="evidence" value="ECO:0007669"/>
    <property type="project" value="UniProtKB-UniRule"/>
</dbReference>
<dbReference type="Gene3D" id="3.40.50.150">
    <property type="entry name" value="Vaccinia Virus protein VP39"/>
    <property type="match status" value="1"/>
</dbReference>
<dbReference type="HAMAP" id="MF_01057">
    <property type="entry name" value="tRNA_methyltr_TrmB"/>
    <property type="match status" value="1"/>
</dbReference>
<dbReference type="InterPro" id="IPR029063">
    <property type="entry name" value="SAM-dependent_MTases_sf"/>
</dbReference>
<dbReference type="InterPro" id="IPR003358">
    <property type="entry name" value="tRNA_(Gua-N-7)_MeTrfase_Trmb"/>
</dbReference>
<dbReference type="InterPro" id="IPR055361">
    <property type="entry name" value="tRNA_methyltr_TrmB_bact"/>
</dbReference>
<dbReference type="NCBIfam" id="TIGR00091">
    <property type="entry name" value="tRNA (guanosine(46)-N7)-methyltransferase TrmB"/>
    <property type="match status" value="1"/>
</dbReference>
<dbReference type="PANTHER" id="PTHR23417">
    <property type="entry name" value="3-DEOXY-D-MANNO-OCTULOSONIC-ACID TRANSFERASE/TRNA GUANINE-N 7 - -METHYLTRANSFERASE"/>
    <property type="match status" value="1"/>
</dbReference>
<dbReference type="PANTHER" id="PTHR23417:SF14">
    <property type="entry name" value="PENTACOTRIPEPTIDE-REPEAT REGION OF PRORP DOMAIN-CONTAINING PROTEIN"/>
    <property type="match status" value="1"/>
</dbReference>
<dbReference type="Pfam" id="PF02390">
    <property type="entry name" value="Methyltransf_4"/>
    <property type="match status" value="1"/>
</dbReference>
<dbReference type="SUPFAM" id="SSF53335">
    <property type="entry name" value="S-adenosyl-L-methionine-dependent methyltransferases"/>
    <property type="match status" value="1"/>
</dbReference>
<dbReference type="PROSITE" id="PS51625">
    <property type="entry name" value="SAM_MT_TRMB"/>
    <property type="match status" value="1"/>
</dbReference>
<gene>
    <name evidence="2" type="primary">trmB</name>
    <name type="ordered locus">Nwi_0020</name>
</gene>
<sequence length="257" mass="29020">MTVVVSDHQNPRPPGDDAAPLGRTGNRDRPPGSFFGRRKGHRLRPHQNDLVAQLLPRLGFDPARIGPSGPAALFDPPVDETRIEIGFGGGEHLVAEALAFPRAGFIGCEPYVNGMAKILVQIEAHAIRNIRLFAGDASQLLACLPPASLARIDLIHPDPWPKRRHWKRRFVQDATVAEMARVLRPEGEFRFVSDIDDYCAWTLTHLARSPDFLWLAERSADWQDPWSGYTMTRYGRKAMREGRRAAYLRFRRERTAV</sequence>
<organism>
    <name type="scientific">Nitrobacter winogradskyi (strain ATCC 25391 / DSM 10237 / CIP 104748 / NCIMB 11846 / Nb-255)</name>
    <dbReference type="NCBI Taxonomy" id="323098"/>
    <lineage>
        <taxon>Bacteria</taxon>
        <taxon>Pseudomonadati</taxon>
        <taxon>Pseudomonadota</taxon>
        <taxon>Alphaproteobacteria</taxon>
        <taxon>Hyphomicrobiales</taxon>
        <taxon>Nitrobacteraceae</taxon>
        <taxon>Nitrobacter</taxon>
    </lineage>
</organism>
<feature type="chain" id="PRO_0000229178" description="tRNA (guanine-N(7)-)-methyltransferase">
    <location>
        <begin position="1"/>
        <end position="257"/>
    </location>
</feature>
<feature type="region of interest" description="Disordered" evidence="3">
    <location>
        <begin position="1"/>
        <end position="42"/>
    </location>
</feature>
<feature type="active site" evidence="1">
    <location>
        <position position="158"/>
    </location>
</feature>
<feature type="binding site" evidence="2">
    <location>
        <position position="84"/>
    </location>
    <ligand>
        <name>S-adenosyl-L-methionine</name>
        <dbReference type="ChEBI" id="CHEBI:59789"/>
    </ligand>
</feature>
<feature type="binding site" evidence="2">
    <location>
        <position position="109"/>
    </location>
    <ligand>
        <name>S-adenosyl-L-methionine</name>
        <dbReference type="ChEBI" id="CHEBI:59789"/>
    </ligand>
</feature>
<feature type="binding site" evidence="2">
    <location>
        <position position="136"/>
    </location>
    <ligand>
        <name>S-adenosyl-L-methionine</name>
        <dbReference type="ChEBI" id="CHEBI:59789"/>
    </ligand>
</feature>
<feature type="binding site" evidence="2">
    <location>
        <position position="158"/>
    </location>
    <ligand>
        <name>S-adenosyl-L-methionine</name>
        <dbReference type="ChEBI" id="CHEBI:59789"/>
    </ligand>
</feature>
<feature type="binding site" evidence="2">
    <location>
        <position position="162"/>
    </location>
    <ligand>
        <name>substrate</name>
    </ligand>
</feature>
<feature type="binding site" evidence="2">
    <location>
        <position position="194"/>
    </location>
    <ligand>
        <name>substrate</name>
    </ligand>
</feature>
<accession>Q3SWQ3</accession>